<accession>A1IVR8</accession>
<accession>P84467</accession>
<proteinExistence type="evidence at protein level"/>
<feature type="signal peptide" evidence="3">
    <location>
        <begin position="1" status="less than"/>
        <end position="2"/>
    </location>
</feature>
<feature type="chain" id="PRO_5000189420" description="Alpha-elapitoxin-Bc2a">
    <location>
        <begin position="3"/>
        <end position="75"/>
    </location>
</feature>
<feature type="disulfide bond" evidence="1">
    <location>
        <begin position="5"/>
        <end position="24"/>
    </location>
</feature>
<feature type="disulfide bond" evidence="1">
    <location>
        <begin position="17"/>
        <end position="45"/>
    </location>
</feature>
<feature type="disulfide bond" evidence="1">
    <location>
        <begin position="30"/>
        <end position="34"/>
    </location>
</feature>
<feature type="disulfide bond" evidence="1">
    <location>
        <begin position="49"/>
        <end position="60"/>
    </location>
</feature>
<feature type="disulfide bond" evidence="1">
    <location>
        <begin position="61"/>
        <end position="66"/>
    </location>
</feature>
<feature type="non-terminal residue" evidence="7">
    <location>
        <position position="1"/>
    </location>
</feature>
<reference key="1">
    <citation type="journal article" date="2019" name="Biochem. J.">
        <title>Novel long-chain neurotoxins from Bungarus candidus distinguish the two binding sites in muscle-type nicotinic acetylcholine receptors.</title>
        <authorList>
            <person name="Utkin Y.N."/>
            <person name="Kuch U."/>
            <person name="Kasheverov I.E."/>
            <person name="Lebedev D.S."/>
            <person name="Cederlund E."/>
            <person name="Molles B.E."/>
            <person name="Polyak I."/>
            <person name="Ivanov I.A."/>
            <person name="Prokopev N.A."/>
            <person name="Ziganshin R.H."/>
            <person name="Jornvall H."/>
            <person name="Alvelius G."/>
            <person name="Chanhome L."/>
            <person name="Warrell D.A."/>
            <person name="Mebs D."/>
            <person name="Bergman T."/>
            <person name="Tsetlin V.I."/>
        </authorList>
    </citation>
    <scope>NUCLEOTIDE SEQUENCE [GENOMIC DNA]</scope>
    <scope>PROTEIN SEQUENCE OF 3-75</scope>
    <scope>FUNCTION</scope>
    <scope>MASS SPECTROMETRY</scope>
    <scope>SYNTHESIS OF 3-75</scope>
    <scope>TOXIC DOSE</scope>
    <scope>3D-STRUCTURE MODELING</scope>
    <source>
        <tissue>Venom</tissue>
    </source>
</reference>
<reference key="2">
    <citation type="submission" date="2005-02" db="UniProtKB">
        <title>A novel reversible long-chain neurotoxin from Malayan krait (Bungarus candidus) venom with high toxicity and site-selective binding at the alpha-delta subunit interface of the muscle nicotinic acetylcholine receptor.</title>
        <authorList>
            <person name="Kuch U."/>
            <person name="Cederlund E."/>
            <person name="Molles B.E."/>
            <person name="Anvelius G."/>
            <person name="Bergman T."/>
            <person name="Chanhome L."/>
            <person name="Omori-Satoh T."/>
            <person name="Chen Y.M."/>
            <person name="Samejima Y."/>
            <person name="Warrell D.A."/>
            <person name="Mebs D."/>
        </authorList>
    </citation>
    <scope>PROTEIN SEQUENCE OF 3-75</scope>
    <scope>FUNCTION</scope>
    <scope>SUBCELLULAR LOCATION</scope>
    <scope>MASS SPECTROMETRY</scope>
    <source>
        <tissue>Venom</tissue>
    </source>
</reference>
<evidence type="ECO:0000250" key="1">
    <source>
        <dbReference type="UniProtKB" id="P60615"/>
    </source>
</evidence>
<evidence type="ECO:0000269" key="2">
    <source>
    </source>
</evidence>
<evidence type="ECO:0000269" key="3">
    <source ref="2"/>
</evidence>
<evidence type="ECO:0000303" key="4">
    <source>
    </source>
</evidence>
<evidence type="ECO:0000303" key="5">
    <source ref="2"/>
</evidence>
<evidence type="ECO:0000305" key="6"/>
<evidence type="ECO:0000312" key="7">
    <source>
        <dbReference type="EMBL" id="CAJ77819.1"/>
    </source>
</evidence>
<name>3L21_BUNCA</name>
<protein>
    <recommendedName>
        <fullName evidence="6">Alpha-elapitoxin-Bc2a</fullName>
        <shortName evidence="6">Alpha-EPTX-Bc2a</shortName>
    </recommendedName>
    <alternativeName>
        <fullName evidence="7">Alpha-delta-Bgt-1</fullName>
    </alternativeName>
    <alternativeName>
        <fullName evidence="4 5">Alpha/delta-bungarotoxin-1</fullName>
        <shortName evidence="4">Alpha/delta-BgTx-1</shortName>
    </alternativeName>
</protein>
<sequence>YTLLCYKTPSPINAETCPPGENLCYTKMWCDAWCSSRGKVIELGCAATCPSKKPYEEVTCCSTDKCNPHPKQRPG</sequence>
<keyword id="KW-0008">Acetylcholine receptor inhibiting toxin</keyword>
<keyword id="KW-0903">Direct protein sequencing</keyword>
<keyword id="KW-1015">Disulfide bond</keyword>
<keyword id="KW-0872">Ion channel impairing toxin</keyword>
<keyword id="KW-0528">Neurotoxin</keyword>
<keyword id="KW-0629">Postsynaptic neurotoxin</keyword>
<keyword id="KW-0964">Secreted</keyword>
<keyword id="KW-0732">Signal</keyword>
<keyword id="KW-0800">Toxin</keyword>
<organism>
    <name type="scientific">Bungarus candidus</name>
    <name type="common">Malayan krait</name>
    <dbReference type="NCBI Taxonomy" id="92438"/>
    <lineage>
        <taxon>Eukaryota</taxon>
        <taxon>Metazoa</taxon>
        <taxon>Chordata</taxon>
        <taxon>Craniata</taxon>
        <taxon>Vertebrata</taxon>
        <taxon>Euteleostomi</taxon>
        <taxon>Lepidosauria</taxon>
        <taxon>Squamata</taxon>
        <taxon>Bifurcata</taxon>
        <taxon>Unidentata</taxon>
        <taxon>Episquamata</taxon>
        <taxon>Toxicofera</taxon>
        <taxon>Serpentes</taxon>
        <taxon>Colubroidea</taxon>
        <taxon>Elapidae</taxon>
        <taxon>Bungarinae</taxon>
        <taxon>Bungarus</taxon>
    </lineage>
</organism>
<dbReference type="EMBL" id="AM231681">
    <property type="protein sequence ID" value="CAJ77819.1"/>
    <property type="molecule type" value="Genomic_DNA"/>
</dbReference>
<dbReference type="SMR" id="A1IVR8"/>
<dbReference type="GO" id="GO:0005576">
    <property type="term" value="C:extracellular region"/>
    <property type="evidence" value="ECO:0007669"/>
    <property type="project" value="UniProtKB-SubCell"/>
</dbReference>
<dbReference type="GO" id="GO:0030550">
    <property type="term" value="F:acetylcholine receptor inhibitor activity"/>
    <property type="evidence" value="ECO:0007669"/>
    <property type="project" value="UniProtKB-KW"/>
</dbReference>
<dbReference type="GO" id="GO:0099106">
    <property type="term" value="F:ion channel regulator activity"/>
    <property type="evidence" value="ECO:0007669"/>
    <property type="project" value="UniProtKB-KW"/>
</dbReference>
<dbReference type="GO" id="GO:0090729">
    <property type="term" value="F:toxin activity"/>
    <property type="evidence" value="ECO:0007669"/>
    <property type="project" value="UniProtKB-KW"/>
</dbReference>
<dbReference type="CDD" id="cd00206">
    <property type="entry name" value="TFP_snake_toxin"/>
    <property type="match status" value="1"/>
</dbReference>
<dbReference type="Gene3D" id="2.10.60.10">
    <property type="entry name" value="CD59"/>
    <property type="match status" value="1"/>
</dbReference>
<dbReference type="InterPro" id="IPR003571">
    <property type="entry name" value="Snake_3FTx"/>
</dbReference>
<dbReference type="InterPro" id="IPR045860">
    <property type="entry name" value="Snake_toxin-like_sf"/>
</dbReference>
<dbReference type="InterPro" id="IPR018354">
    <property type="entry name" value="Snake_toxin_con_site"/>
</dbReference>
<dbReference type="InterPro" id="IPR054131">
    <property type="entry name" value="Toxin_cobra-type"/>
</dbReference>
<dbReference type="Pfam" id="PF21947">
    <property type="entry name" value="Toxin_cobra-type"/>
    <property type="match status" value="1"/>
</dbReference>
<dbReference type="SUPFAM" id="SSF57302">
    <property type="entry name" value="Snake toxin-like"/>
    <property type="match status" value="1"/>
</dbReference>
<dbReference type="PROSITE" id="PS00272">
    <property type="entry name" value="SNAKE_TOXIN"/>
    <property type="match status" value="1"/>
</dbReference>
<comment type="function">
    <text evidence="1 2 3">Binds to muscular and neuronal nicotinic acetylcholine receptor (nAChR) and inhibits acetylcholine from binding to the receptor, thereby impairing neuromuscular and neuronal transmission (PubMed:30944155, Ref.2). Reversibly blocks chick and mouse muscle nicotinic acetylcholine receptors (PubMed:30944155, Ref.2). Blocks muscle type nAChR with an IC(50)=30 nM, when heterologously expressed in oocytes (PubMed:30944155). Also binds with high affinity to alpha-7/CHRNA7 nAChRs (PubMed:30944155). In addition, shows a weak inhibition of neuronal alpha-3-beta-2/CHRNA3-CHRNB2 nAChR (IC(50)=2.9 uM) (PubMed:30944155). Selectively binds to alpha-1-delta subunit interface of the mouse muscle nicotinic acetylcholine receptor, with a 10-fold higher affinity for the adult than for the fetal receptors (PubMed:30944155, Ref.2). In vivo, when intraperitoneally injected into mice, causes flaccid paralysis and respiratory distress, followed by death within 2-4 hours (PubMed:30944155).</text>
</comment>
<comment type="subunit">
    <text evidence="1">Monomer in solution, homodimer in crystal state.</text>
</comment>
<comment type="subcellular location">
    <subcellularLocation>
        <location evidence="3">Secreted</location>
    </subcellularLocation>
</comment>
<comment type="tissue specificity">
    <text evidence="6">Expressed by the venom gland.</text>
</comment>
<comment type="mass spectrometry"/>
<comment type="mass spectrometry"/>
<comment type="toxic dose">
    <text evidence="2">LD(50) is 170-280 ug/kg by intraperitoneal injection into mice.</text>
</comment>
<comment type="similarity">
    <text evidence="6">Belongs to the three-finger toxin family. Long-chain subfamily. Type II alpha-neurotoxin sub-subfamily.</text>
</comment>